<proteinExistence type="inferred from homology"/>
<geneLocation type="plasmid">
    <name>pSymA</name>
    <name>megaplasmid 1</name>
</geneLocation>
<organism>
    <name type="scientific">Rhizobium meliloti (strain 1021)</name>
    <name type="common">Ensifer meliloti</name>
    <name type="synonym">Sinorhizobium meliloti</name>
    <dbReference type="NCBI Taxonomy" id="266834"/>
    <lineage>
        <taxon>Bacteria</taxon>
        <taxon>Pseudomonadati</taxon>
        <taxon>Pseudomonadota</taxon>
        <taxon>Alphaproteobacteria</taxon>
        <taxon>Hyphomicrobiales</taxon>
        <taxon>Rhizobiaceae</taxon>
        <taxon>Sinorhizobium/Ensifer group</taxon>
        <taxon>Sinorhizobium</taxon>
    </lineage>
</organism>
<keyword id="KW-0963">Cytoplasm</keyword>
<keyword id="KW-0227">DNA damage</keyword>
<keyword id="KW-0234">DNA repair</keyword>
<keyword id="KW-0235">DNA replication</keyword>
<keyword id="KW-0239">DNA-directed DNA polymerase</keyword>
<keyword id="KW-0548">Nucleotidyltransferase</keyword>
<keyword id="KW-0614">Plasmid</keyword>
<keyword id="KW-1185">Reference proteome</keyword>
<keyword id="KW-0808">Transferase</keyword>
<gene>
    <name evidence="1" type="primary">dnaE2-2</name>
    <name type="ordered locus">RA0489</name>
    <name type="ORF">SMa0892</name>
</gene>
<feature type="chain" id="PRO_0000103396" description="Error-prone DNA polymerase 2">
    <location>
        <begin position="1"/>
        <end position="1087"/>
    </location>
</feature>
<feature type="region of interest" description="Disordered" evidence="2">
    <location>
        <begin position="1033"/>
        <end position="1064"/>
    </location>
</feature>
<accession>Q92ZJ6</accession>
<sequence>MRYAELQVTTHFSFLRAASSAEELFATARLMGIEALGVVDRNSLAGIVRALEASRATGLRLVVGCRLDLQDGMSILVYPTDRAAYSRLTRLLTLGKGRGGKANCIIHFDDVALYAEGLIGILVPDLADEVCAVQLRKIAEVFGDRAYVSLCLRRRPNDQLQLHELTNLAVKHRVKTIVTNDVLFHEHGRRQLQDVVTCIRTGMTIDDVGFERERHADRYLKPPEEMARLFPAYPEALARTMEIVERCRFSLEELVYQYPEEALILGMTAQQSLQHYTWEGVRARYPEGLPTHVEKTIRHELALIETMKYAPYFLTVFSIVRYARSQGILCQGRGSAANSAVCYVLGITSIDPETNDLLFERFVSQERDEPPDIDVDFEHERREEVIQWIYKTYGHDKAALCSTVTRYRAKGAIRDVGKALDLPEDLIRTLSSGIWSWSETVGERQVRELGLNPDDRRLTLTLRLAQQLMGAPRNLSQHPGGFVLTHDRLDDLVPIEPATMADRQVIEWDKDDIEALKFLKVDVLALGMLTCMAKAFALISEHKHEDIDLATIPQEDPATYAMIRKADTLGTFQIESRAQMSMLPRMKPRTFYDLVIQVAIVRPGPIQGDMVHPYLRRREGKEKVEYPTPELEAVLHKTLGVPLFQESAMRVAMVCAGFTGGEADQLRKSMATFKFTGGVSRFKDKLVNGMIRNGYTKEFAEKTFSQLEGFGSYGFPESHAASFALIAYASNYIKCYFPDVFCAALLNSQPMGFYAPAQIVRDAREHGVEVRPICINRSRWDCMLEPIDGSGGHAVRLGMRLVRGLATADAARIVAARADEPFTSVDDMWRRSGVPVASLVELAEADAFLPSLSLERRDALWAIKALRDEPLPLFTAAADREARAIAEQEEPEVELRQMTDGQNVVEDYSHTGLTLREHPLRFMRDDLAKRRIVTCAQAMTAHDGQWLMAAGLVLVRQRPGSAKGVMFITIEDETGIANIVVWPKLFERSRRVVLGASMMAINGRIQREGEVVHLVAQQLFDLSADLSSLAERDGAFRPPTGRGDEFAHGSPGSADSRGKAPPGVRARDILVPDLHIDTLKIKSRNFQ</sequence>
<comment type="function">
    <text evidence="1">DNA polymerase involved in damage-induced mutagenesis and translesion synthesis (TLS). It is not the major replicative DNA polymerase.</text>
</comment>
<comment type="catalytic activity">
    <reaction evidence="1">
        <text>DNA(n) + a 2'-deoxyribonucleoside 5'-triphosphate = DNA(n+1) + diphosphate</text>
        <dbReference type="Rhea" id="RHEA:22508"/>
        <dbReference type="Rhea" id="RHEA-COMP:17339"/>
        <dbReference type="Rhea" id="RHEA-COMP:17340"/>
        <dbReference type="ChEBI" id="CHEBI:33019"/>
        <dbReference type="ChEBI" id="CHEBI:61560"/>
        <dbReference type="ChEBI" id="CHEBI:173112"/>
        <dbReference type="EC" id="2.7.7.7"/>
    </reaction>
</comment>
<comment type="subcellular location">
    <subcellularLocation>
        <location evidence="1">Cytoplasm</location>
    </subcellularLocation>
</comment>
<comment type="similarity">
    <text evidence="1">Belongs to the DNA polymerase type-C family. DnaE2 subfamily.</text>
</comment>
<dbReference type="EC" id="2.7.7.7" evidence="1"/>
<dbReference type="EMBL" id="AE006469">
    <property type="protein sequence ID" value="AAK65147.1"/>
    <property type="molecule type" value="Genomic_DNA"/>
</dbReference>
<dbReference type="PIR" id="A95323">
    <property type="entry name" value="A95323"/>
</dbReference>
<dbReference type="RefSeq" id="NP_435735.1">
    <property type="nucleotide sequence ID" value="NC_003037.1"/>
</dbReference>
<dbReference type="RefSeq" id="WP_010967470.1">
    <property type="nucleotide sequence ID" value="NC_003037.1"/>
</dbReference>
<dbReference type="SMR" id="Q92ZJ6"/>
<dbReference type="EnsemblBacteria" id="AAK65147">
    <property type="protein sequence ID" value="AAK65147"/>
    <property type="gene ID" value="SMa0892"/>
</dbReference>
<dbReference type="KEGG" id="sme:SMa0892"/>
<dbReference type="PATRIC" id="fig|266834.11.peg.501"/>
<dbReference type="HOGENOM" id="CLU_001600_4_0_5"/>
<dbReference type="OrthoDB" id="9803237at2"/>
<dbReference type="Proteomes" id="UP000001976">
    <property type="component" value="Plasmid pSymA"/>
</dbReference>
<dbReference type="GO" id="GO:0005737">
    <property type="term" value="C:cytoplasm"/>
    <property type="evidence" value="ECO:0007669"/>
    <property type="project" value="UniProtKB-SubCell"/>
</dbReference>
<dbReference type="GO" id="GO:0008408">
    <property type="term" value="F:3'-5' exonuclease activity"/>
    <property type="evidence" value="ECO:0007669"/>
    <property type="project" value="InterPro"/>
</dbReference>
<dbReference type="GO" id="GO:0003887">
    <property type="term" value="F:DNA-directed DNA polymerase activity"/>
    <property type="evidence" value="ECO:0007669"/>
    <property type="project" value="UniProtKB-UniRule"/>
</dbReference>
<dbReference type="GO" id="GO:0003676">
    <property type="term" value="F:nucleic acid binding"/>
    <property type="evidence" value="ECO:0007669"/>
    <property type="project" value="InterPro"/>
</dbReference>
<dbReference type="GO" id="GO:0006281">
    <property type="term" value="P:DNA repair"/>
    <property type="evidence" value="ECO:0007669"/>
    <property type="project" value="UniProtKB-UniRule"/>
</dbReference>
<dbReference type="GO" id="GO:0006260">
    <property type="term" value="P:DNA replication"/>
    <property type="evidence" value="ECO:0007669"/>
    <property type="project" value="UniProtKB-KW"/>
</dbReference>
<dbReference type="GO" id="GO:0009432">
    <property type="term" value="P:SOS response"/>
    <property type="evidence" value="ECO:0000269"/>
    <property type="project" value="CollecTF"/>
</dbReference>
<dbReference type="CDD" id="cd04485">
    <property type="entry name" value="DnaE_OBF"/>
    <property type="match status" value="1"/>
</dbReference>
<dbReference type="CDD" id="cd07434">
    <property type="entry name" value="PHP_PolIIIA_DnaE2"/>
    <property type="match status" value="1"/>
</dbReference>
<dbReference type="FunFam" id="1.10.150.870:FF:000002">
    <property type="entry name" value="Error-prone DNA polymerase"/>
    <property type="match status" value="1"/>
</dbReference>
<dbReference type="Gene3D" id="1.10.150.870">
    <property type="match status" value="1"/>
</dbReference>
<dbReference type="Gene3D" id="3.20.20.140">
    <property type="entry name" value="Metal-dependent hydrolases"/>
    <property type="match status" value="1"/>
</dbReference>
<dbReference type="HAMAP" id="MF_01902">
    <property type="entry name" value="DNApol_error_prone"/>
    <property type="match status" value="1"/>
</dbReference>
<dbReference type="InterPro" id="IPR011708">
    <property type="entry name" value="DNA_pol3_alpha_NTPase_dom"/>
</dbReference>
<dbReference type="InterPro" id="IPR040982">
    <property type="entry name" value="DNA_pol3_finger"/>
</dbReference>
<dbReference type="InterPro" id="IPR023073">
    <property type="entry name" value="DnaE2"/>
</dbReference>
<dbReference type="InterPro" id="IPR004805">
    <property type="entry name" value="DnaE2/DnaE/PolC"/>
</dbReference>
<dbReference type="InterPro" id="IPR029460">
    <property type="entry name" value="DNAPol_HHH"/>
</dbReference>
<dbReference type="InterPro" id="IPR004365">
    <property type="entry name" value="NA-bd_OB_tRNA"/>
</dbReference>
<dbReference type="InterPro" id="IPR004013">
    <property type="entry name" value="PHP_dom"/>
</dbReference>
<dbReference type="InterPro" id="IPR003141">
    <property type="entry name" value="Pol/His_phosphatase_N"/>
</dbReference>
<dbReference type="InterPro" id="IPR016195">
    <property type="entry name" value="Pol/histidinol_Pase-like"/>
</dbReference>
<dbReference type="NCBIfam" id="TIGR00594">
    <property type="entry name" value="polc"/>
    <property type="match status" value="1"/>
</dbReference>
<dbReference type="NCBIfam" id="NF004225">
    <property type="entry name" value="PRK05672.1"/>
    <property type="match status" value="1"/>
</dbReference>
<dbReference type="PANTHER" id="PTHR32294">
    <property type="entry name" value="DNA POLYMERASE III SUBUNIT ALPHA"/>
    <property type="match status" value="1"/>
</dbReference>
<dbReference type="PANTHER" id="PTHR32294:SF4">
    <property type="entry name" value="ERROR-PRONE DNA POLYMERASE"/>
    <property type="match status" value="1"/>
</dbReference>
<dbReference type="Pfam" id="PF07733">
    <property type="entry name" value="DNA_pol3_alpha"/>
    <property type="match status" value="1"/>
</dbReference>
<dbReference type="Pfam" id="PF17657">
    <property type="entry name" value="DNA_pol3_finger"/>
    <property type="match status" value="1"/>
</dbReference>
<dbReference type="Pfam" id="PF14579">
    <property type="entry name" value="HHH_6"/>
    <property type="match status" value="1"/>
</dbReference>
<dbReference type="Pfam" id="PF02811">
    <property type="entry name" value="PHP"/>
    <property type="match status" value="1"/>
</dbReference>
<dbReference type="Pfam" id="PF01336">
    <property type="entry name" value="tRNA_anti-codon"/>
    <property type="match status" value="1"/>
</dbReference>
<dbReference type="SMART" id="SM00481">
    <property type="entry name" value="POLIIIAc"/>
    <property type="match status" value="1"/>
</dbReference>
<dbReference type="SUPFAM" id="SSF89550">
    <property type="entry name" value="PHP domain-like"/>
    <property type="match status" value="1"/>
</dbReference>
<evidence type="ECO:0000255" key="1">
    <source>
        <dbReference type="HAMAP-Rule" id="MF_01902"/>
    </source>
</evidence>
<evidence type="ECO:0000256" key="2">
    <source>
        <dbReference type="SAM" id="MobiDB-lite"/>
    </source>
</evidence>
<reference key="1">
    <citation type="journal article" date="2001" name="Proc. Natl. Acad. Sci. U.S.A.">
        <title>Nucleotide sequence and predicted functions of the entire Sinorhizobium meliloti pSymA megaplasmid.</title>
        <authorList>
            <person name="Barnett M.J."/>
            <person name="Fisher R.F."/>
            <person name="Jones T."/>
            <person name="Komp C."/>
            <person name="Abola A.P."/>
            <person name="Barloy-Hubler F."/>
            <person name="Bowser L."/>
            <person name="Capela D."/>
            <person name="Galibert F."/>
            <person name="Gouzy J."/>
            <person name="Gurjal M."/>
            <person name="Hong A."/>
            <person name="Huizar L."/>
            <person name="Hyman R.W."/>
            <person name="Kahn D."/>
            <person name="Kahn M.L."/>
            <person name="Kalman S."/>
            <person name="Keating D.H."/>
            <person name="Palm C."/>
            <person name="Peck M.C."/>
            <person name="Surzycki R."/>
            <person name="Wells D.H."/>
            <person name="Yeh K.-C."/>
            <person name="Davis R.W."/>
            <person name="Federspiel N.A."/>
            <person name="Long S.R."/>
        </authorList>
    </citation>
    <scope>NUCLEOTIDE SEQUENCE [LARGE SCALE GENOMIC DNA]</scope>
    <source>
        <strain>1021</strain>
    </source>
</reference>
<reference key="2">
    <citation type="journal article" date="2001" name="Science">
        <title>The composite genome of the legume symbiont Sinorhizobium meliloti.</title>
        <authorList>
            <person name="Galibert F."/>
            <person name="Finan T.M."/>
            <person name="Long S.R."/>
            <person name="Puehler A."/>
            <person name="Abola P."/>
            <person name="Ampe F."/>
            <person name="Barloy-Hubler F."/>
            <person name="Barnett M.J."/>
            <person name="Becker A."/>
            <person name="Boistard P."/>
            <person name="Bothe G."/>
            <person name="Boutry M."/>
            <person name="Bowser L."/>
            <person name="Buhrmester J."/>
            <person name="Cadieu E."/>
            <person name="Capela D."/>
            <person name="Chain P."/>
            <person name="Cowie A."/>
            <person name="Davis R.W."/>
            <person name="Dreano S."/>
            <person name="Federspiel N.A."/>
            <person name="Fisher R.F."/>
            <person name="Gloux S."/>
            <person name="Godrie T."/>
            <person name="Goffeau A."/>
            <person name="Golding B."/>
            <person name="Gouzy J."/>
            <person name="Gurjal M."/>
            <person name="Hernandez-Lucas I."/>
            <person name="Hong A."/>
            <person name="Huizar L."/>
            <person name="Hyman R.W."/>
            <person name="Jones T."/>
            <person name="Kahn D."/>
            <person name="Kahn M.L."/>
            <person name="Kalman S."/>
            <person name="Keating D.H."/>
            <person name="Kiss E."/>
            <person name="Komp C."/>
            <person name="Lelaure V."/>
            <person name="Masuy D."/>
            <person name="Palm C."/>
            <person name="Peck M.C."/>
            <person name="Pohl T.M."/>
            <person name="Portetelle D."/>
            <person name="Purnelle B."/>
            <person name="Ramsperger U."/>
            <person name="Surzycki R."/>
            <person name="Thebault P."/>
            <person name="Vandenbol M."/>
            <person name="Vorhoelter F.J."/>
            <person name="Weidner S."/>
            <person name="Wells D.H."/>
            <person name="Wong K."/>
            <person name="Yeh K.-C."/>
            <person name="Batut J."/>
        </authorList>
    </citation>
    <scope>NUCLEOTIDE SEQUENCE [LARGE SCALE GENOMIC DNA]</scope>
    <source>
        <strain>1021</strain>
    </source>
</reference>
<name>DNE22_RHIME</name>
<protein>
    <recommendedName>
        <fullName evidence="1">Error-prone DNA polymerase 2</fullName>
        <ecNumber evidence="1">2.7.7.7</ecNumber>
    </recommendedName>
</protein>